<dbReference type="EMBL" id="AE016853">
    <property type="protein sequence ID" value="AAO57952.1"/>
    <property type="molecule type" value="Genomic_DNA"/>
</dbReference>
<dbReference type="RefSeq" id="NP_794257.1">
    <property type="nucleotide sequence ID" value="NC_004578.1"/>
</dbReference>
<dbReference type="RefSeq" id="WP_003377482.1">
    <property type="nucleotide sequence ID" value="NC_004578.1"/>
</dbReference>
<dbReference type="SMR" id="Q87WP1"/>
<dbReference type="STRING" id="223283.PSPTO_4504"/>
<dbReference type="GeneID" id="61789762"/>
<dbReference type="KEGG" id="pst:PSPTO_4504"/>
<dbReference type="PATRIC" id="fig|223283.9.peg.4620"/>
<dbReference type="eggNOG" id="COG0484">
    <property type="taxonomic scope" value="Bacteria"/>
</dbReference>
<dbReference type="HOGENOM" id="CLU_017633_0_7_6"/>
<dbReference type="OrthoDB" id="9779889at2"/>
<dbReference type="PhylomeDB" id="Q87WP1"/>
<dbReference type="Proteomes" id="UP000002515">
    <property type="component" value="Chromosome"/>
</dbReference>
<dbReference type="GO" id="GO:0005737">
    <property type="term" value="C:cytoplasm"/>
    <property type="evidence" value="ECO:0007669"/>
    <property type="project" value="UniProtKB-SubCell"/>
</dbReference>
<dbReference type="GO" id="GO:0005524">
    <property type="term" value="F:ATP binding"/>
    <property type="evidence" value="ECO:0007669"/>
    <property type="project" value="InterPro"/>
</dbReference>
<dbReference type="GO" id="GO:0031072">
    <property type="term" value="F:heat shock protein binding"/>
    <property type="evidence" value="ECO:0007669"/>
    <property type="project" value="InterPro"/>
</dbReference>
<dbReference type="GO" id="GO:0051082">
    <property type="term" value="F:unfolded protein binding"/>
    <property type="evidence" value="ECO:0007669"/>
    <property type="project" value="UniProtKB-UniRule"/>
</dbReference>
<dbReference type="GO" id="GO:0008270">
    <property type="term" value="F:zinc ion binding"/>
    <property type="evidence" value="ECO:0007669"/>
    <property type="project" value="UniProtKB-UniRule"/>
</dbReference>
<dbReference type="GO" id="GO:0051085">
    <property type="term" value="P:chaperone cofactor-dependent protein refolding"/>
    <property type="evidence" value="ECO:0007669"/>
    <property type="project" value="TreeGrafter"/>
</dbReference>
<dbReference type="GO" id="GO:0006260">
    <property type="term" value="P:DNA replication"/>
    <property type="evidence" value="ECO:0007669"/>
    <property type="project" value="UniProtKB-KW"/>
</dbReference>
<dbReference type="GO" id="GO:0042026">
    <property type="term" value="P:protein refolding"/>
    <property type="evidence" value="ECO:0007669"/>
    <property type="project" value="TreeGrafter"/>
</dbReference>
<dbReference type="GO" id="GO:0009408">
    <property type="term" value="P:response to heat"/>
    <property type="evidence" value="ECO:0007669"/>
    <property type="project" value="InterPro"/>
</dbReference>
<dbReference type="CDD" id="cd06257">
    <property type="entry name" value="DnaJ"/>
    <property type="match status" value="1"/>
</dbReference>
<dbReference type="CDD" id="cd10747">
    <property type="entry name" value="DnaJ_C"/>
    <property type="match status" value="1"/>
</dbReference>
<dbReference type="CDD" id="cd10719">
    <property type="entry name" value="DnaJ_zf"/>
    <property type="match status" value="1"/>
</dbReference>
<dbReference type="FunFam" id="1.10.287.110:FF:000051">
    <property type="entry name" value="Molecular chaperone DnaJ"/>
    <property type="match status" value="1"/>
</dbReference>
<dbReference type="FunFam" id="2.10.230.10:FF:000002">
    <property type="entry name" value="Molecular chaperone DnaJ"/>
    <property type="match status" value="1"/>
</dbReference>
<dbReference type="FunFam" id="2.60.260.20:FF:000004">
    <property type="entry name" value="Molecular chaperone DnaJ"/>
    <property type="match status" value="1"/>
</dbReference>
<dbReference type="Gene3D" id="1.10.287.110">
    <property type="entry name" value="DnaJ domain"/>
    <property type="match status" value="1"/>
</dbReference>
<dbReference type="Gene3D" id="2.10.230.10">
    <property type="entry name" value="Heat shock protein DnaJ, cysteine-rich domain"/>
    <property type="match status" value="1"/>
</dbReference>
<dbReference type="Gene3D" id="2.60.260.20">
    <property type="entry name" value="Urease metallochaperone UreE, N-terminal domain"/>
    <property type="match status" value="2"/>
</dbReference>
<dbReference type="HAMAP" id="MF_01152">
    <property type="entry name" value="DnaJ"/>
    <property type="match status" value="1"/>
</dbReference>
<dbReference type="InterPro" id="IPR012724">
    <property type="entry name" value="DnaJ"/>
</dbReference>
<dbReference type="InterPro" id="IPR002939">
    <property type="entry name" value="DnaJ_C"/>
</dbReference>
<dbReference type="InterPro" id="IPR001623">
    <property type="entry name" value="DnaJ_domain"/>
</dbReference>
<dbReference type="InterPro" id="IPR018253">
    <property type="entry name" value="DnaJ_domain_CS"/>
</dbReference>
<dbReference type="InterPro" id="IPR008971">
    <property type="entry name" value="HSP40/DnaJ_pept-bd"/>
</dbReference>
<dbReference type="InterPro" id="IPR001305">
    <property type="entry name" value="HSP_DnaJ_Cys-rich_dom"/>
</dbReference>
<dbReference type="InterPro" id="IPR036410">
    <property type="entry name" value="HSP_DnaJ_Cys-rich_dom_sf"/>
</dbReference>
<dbReference type="InterPro" id="IPR036869">
    <property type="entry name" value="J_dom_sf"/>
</dbReference>
<dbReference type="NCBIfam" id="TIGR02349">
    <property type="entry name" value="DnaJ_bact"/>
    <property type="match status" value="1"/>
</dbReference>
<dbReference type="NCBIfam" id="NF008035">
    <property type="entry name" value="PRK10767.1"/>
    <property type="match status" value="1"/>
</dbReference>
<dbReference type="PANTHER" id="PTHR43096:SF48">
    <property type="entry name" value="CHAPERONE PROTEIN DNAJ"/>
    <property type="match status" value="1"/>
</dbReference>
<dbReference type="PANTHER" id="PTHR43096">
    <property type="entry name" value="DNAJ HOMOLOG 1, MITOCHONDRIAL-RELATED"/>
    <property type="match status" value="1"/>
</dbReference>
<dbReference type="Pfam" id="PF00226">
    <property type="entry name" value="DnaJ"/>
    <property type="match status" value="1"/>
</dbReference>
<dbReference type="Pfam" id="PF01556">
    <property type="entry name" value="DnaJ_C"/>
    <property type="match status" value="1"/>
</dbReference>
<dbReference type="Pfam" id="PF00684">
    <property type="entry name" value="DnaJ_CXXCXGXG"/>
    <property type="match status" value="1"/>
</dbReference>
<dbReference type="PRINTS" id="PR00625">
    <property type="entry name" value="JDOMAIN"/>
</dbReference>
<dbReference type="SMART" id="SM00271">
    <property type="entry name" value="DnaJ"/>
    <property type="match status" value="1"/>
</dbReference>
<dbReference type="SUPFAM" id="SSF46565">
    <property type="entry name" value="Chaperone J-domain"/>
    <property type="match status" value="1"/>
</dbReference>
<dbReference type="SUPFAM" id="SSF57938">
    <property type="entry name" value="DnaJ/Hsp40 cysteine-rich domain"/>
    <property type="match status" value="1"/>
</dbReference>
<dbReference type="SUPFAM" id="SSF49493">
    <property type="entry name" value="HSP40/DnaJ peptide-binding domain"/>
    <property type="match status" value="2"/>
</dbReference>
<dbReference type="PROSITE" id="PS00636">
    <property type="entry name" value="DNAJ_1"/>
    <property type="match status" value="1"/>
</dbReference>
<dbReference type="PROSITE" id="PS50076">
    <property type="entry name" value="DNAJ_2"/>
    <property type="match status" value="1"/>
</dbReference>
<dbReference type="PROSITE" id="PS51188">
    <property type="entry name" value="ZF_CR"/>
    <property type="match status" value="1"/>
</dbReference>
<sequence>MAKRDYYEVLGVERGSSEADLKKAYRRLAMKHHPDRNPDDKASEEMFKEANEAYEVLSDASKRAAYDQYGHAGVDPSMGGGGGFGGGAGGANFSDIFGDVFSDFFGGGRGGGGGGRGGAQRGSDLRYTLELNLEEAVRGTTVNIRVPTLVNCKPCDGSGAKKGSSPVTCPTCGGIGQVRMQQGFFSVQQTCPRCHGHGKIISDPCDSCHGEGRVEESKTLSVKVPPGVDTGDRIRLSGEGEAGAQGGPTGDLYVVINVREHAIFQRDGKHLFCEVPISFTDAALGGELEVPTLDGRVKLKIPEGTQTGKQFRLRGKGVAPVRGGGAGDLMCRVAVETPVNLSKRQRELLEEFRTSLENDESHSPKASGWFEGVKRFFGDL</sequence>
<proteinExistence type="inferred from homology"/>
<keyword id="KW-0143">Chaperone</keyword>
<keyword id="KW-0963">Cytoplasm</keyword>
<keyword id="KW-0235">DNA replication</keyword>
<keyword id="KW-0479">Metal-binding</keyword>
<keyword id="KW-1185">Reference proteome</keyword>
<keyword id="KW-0677">Repeat</keyword>
<keyword id="KW-0346">Stress response</keyword>
<keyword id="KW-0862">Zinc</keyword>
<keyword id="KW-0863">Zinc-finger</keyword>
<reference key="1">
    <citation type="journal article" date="2003" name="Proc. Natl. Acad. Sci. U.S.A.">
        <title>The complete genome sequence of the Arabidopsis and tomato pathogen Pseudomonas syringae pv. tomato DC3000.</title>
        <authorList>
            <person name="Buell C.R."/>
            <person name="Joardar V."/>
            <person name="Lindeberg M."/>
            <person name="Selengut J."/>
            <person name="Paulsen I.T."/>
            <person name="Gwinn M.L."/>
            <person name="Dodson R.J."/>
            <person name="DeBoy R.T."/>
            <person name="Durkin A.S."/>
            <person name="Kolonay J.F."/>
            <person name="Madupu R."/>
            <person name="Daugherty S.C."/>
            <person name="Brinkac L.M."/>
            <person name="Beanan M.J."/>
            <person name="Haft D.H."/>
            <person name="Nelson W.C."/>
            <person name="Davidsen T.M."/>
            <person name="Zafar N."/>
            <person name="Zhou L."/>
            <person name="Liu J."/>
            <person name="Yuan Q."/>
            <person name="Khouri H.M."/>
            <person name="Fedorova N.B."/>
            <person name="Tran B."/>
            <person name="Russell D."/>
            <person name="Berry K.J."/>
            <person name="Utterback T.R."/>
            <person name="Van Aken S.E."/>
            <person name="Feldblyum T.V."/>
            <person name="D'Ascenzo M."/>
            <person name="Deng W.-L."/>
            <person name="Ramos A.R."/>
            <person name="Alfano J.R."/>
            <person name="Cartinhour S."/>
            <person name="Chatterjee A.K."/>
            <person name="Delaney T.P."/>
            <person name="Lazarowitz S.G."/>
            <person name="Martin G.B."/>
            <person name="Schneider D.J."/>
            <person name="Tang X."/>
            <person name="Bender C.L."/>
            <person name="White O."/>
            <person name="Fraser C.M."/>
            <person name="Collmer A."/>
        </authorList>
    </citation>
    <scope>NUCLEOTIDE SEQUENCE [LARGE SCALE GENOMIC DNA]</scope>
    <source>
        <strain>ATCC BAA-871 / DC3000</strain>
    </source>
</reference>
<accession>Q87WP1</accession>
<organism>
    <name type="scientific">Pseudomonas syringae pv. tomato (strain ATCC BAA-871 / DC3000)</name>
    <dbReference type="NCBI Taxonomy" id="223283"/>
    <lineage>
        <taxon>Bacteria</taxon>
        <taxon>Pseudomonadati</taxon>
        <taxon>Pseudomonadota</taxon>
        <taxon>Gammaproteobacteria</taxon>
        <taxon>Pseudomonadales</taxon>
        <taxon>Pseudomonadaceae</taxon>
        <taxon>Pseudomonas</taxon>
    </lineage>
</organism>
<name>DNAJ_PSESM</name>
<comment type="function">
    <text evidence="1">Participates actively in the response to hyperosmotic and heat shock by preventing the aggregation of stress-denatured proteins and by disaggregating proteins, also in an autonomous, DnaK-independent fashion. Unfolded proteins bind initially to DnaJ; upon interaction with the DnaJ-bound protein, DnaK hydrolyzes its bound ATP, resulting in the formation of a stable complex. GrpE releases ADP from DnaK; ATP binding to DnaK triggers the release of the substrate protein, thus completing the reaction cycle. Several rounds of ATP-dependent interactions between DnaJ, DnaK and GrpE are required for fully efficient folding. Also involved, together with DnaK and GrpE, in the DNA replication of plasmids through activation of initiation proteins.</text>
</comment>
<comment type="cofactor">
    <cofactor evidence="1">
        <name>Zn(2+)</name>
        <dbReference type="ChEBI" id="CHEBI:29105"/>
    </cofactor>
    <text evidence="1">Binds 2 Zn(2+) ions per monomer.</text>
</comment>
<comment type="subunit">
    <text evidence="1">Homodimer.</text>
</comment>
<comment type="subcellular location">
    <subcellularLocation>
        <location evidence="1">Cytoplasm</location>
    </subcellularLocation>
</comment>
<comment type="domain">
    <text evidence="1">The J domain is necessary and sufficient to stimulate DnaK ATPase activity. Zinc center 1 plays an important role in the autonomous, DnaK-independent chaperone activity of DnaJ. Zinc center 2 is essential for interaction with DnaK and for DnaJ activity.</text>
</comment>
<comment type="similarity">
    <text evidence="1">Belongs to the DnaJ family.</text>
</comment>
<gene>
    <name evidence="1" type="primary">dnaJ</name>
    <name type="ordered locus">PSPTO_4504</name>
</gene>
<feature type="chain" id="PRO_0000070860" description="Chaperone protein DnaJ">
    <location>
        <begin position="1"/>
        <end position="380"/>
    </location>
</feature>
<feature type="domain" description="J" evidence="1">
    <location>
        <begin position="5"/>
        <end position="70"/>
    </location>
</feature>
<feature type="repeat" description="CXXCXGXG motif">
    <location>
        <begin position="152"/>
        <end position="159"/>
    </location>
</feature>
<feature type="repeat" description="CXXCXGXG motif">
    <location>
        <begin position="169"/>
        <end position="176"/>
    </location>
</feature>
<feature type="repeat" description="CXXCXGXG motif">
    <location>
        <begin position="191"/>
        <end position="198"/>
    </location>
</feature>
<feature type="repeat" description="CXXCXGXG motif">
    <location>
        <begin position="205"/>
        <end position="212"/>
    </location>
</feature>
<feature type="zinc finger region" description="CR-type" evidence="1">
    <location>
        <begin position="139"/>
        <end position="217"/>
    </location>
</feature>
<feature type="binding site" evidence="1">
    <location>
        <position position="152"/>
    </location>
    <ligand>
        <name>Zn(2+)</name>
        <dbReference type="ChEBI" id="CHEBI:29105"/>
        <label>1</label>
    </ligand>
</feature>
<feature type="binding site" evidence="1">
    <location>
        <position position="155"/>
    </location>
    <ligand>
        <name>Zn(2+)</name>
        <dbReference type="ChEBI" id="CHEBI:29105"/>
        <label>1</label>
    </ligand>
</feature>
<feature type="binding site" evidence="1">
    <location>
        <position position="169"/>
    </location>
    <ligand>
        <name>Zn(2+)</name>
        <dbReference type="ChEBI" id="CHEBI:29105"/>
        <label>2</label>
    </ligand>
</feature>
<feature type="binding site" evidence="1">
    <location>
        <position position="172"/>
    </location>
    <ligand>
        <name>Zn(2+)</name>
        <dbReference type="ChEBI" id="CHEBI:29105"/>
        <label>2</label>
    </ligand>
</feature>
<feature type="binding site" evidence="1">
    <location>
        <position position="191"/>
    </location>
    <ligand>
        <name>Zn(2+)</name>
        <dbReference type="ChEBI" id="CHEBI:29105"/>
        <label>2</label>
    </ligand>
</feature>
<feature type="binding site" evidence="1">
    <location>
        <position position="194"/>
    </location>
    <ligand>
        <name>Zn(2+)</name>
        <dbReference type="ChEBI" id="CHEBI:29105"/>
        <label>2</label>
    </ligand>
</feature>
<feature type="binding site" evidence="1">
    <location>
        <position position="205"/>
    </location>
    <ligand>
        <name>Zn(2+)</name>
        <dbReference type="ChEBI" id="CHEBI:29105"/>
        <label>1</label>
    </ligand>
</feature>
<feature type="binding site" evidence="1">
    <location>
        <position position="208"/>
    </location>
    <ligand>
        <name>Zn(2+)</name>
        <dbReference type="ChEBI" id="CHEBI:29105"/>
        <label>1</label>
    </ligand>
</feature>
<protein>
    <recommendedName>
        <fullName evidence="1">Chaperone protein DnaJ</fullName>
    </recommendedName>
</protein>
<evidence type="ECO:0000255" key="1">
    <source>
        <dbReference type="HAMAP-Rule" id="MF_01152"/>
    </source>
</evidence>